<comment type="function">
    <text evidence="1">Nucleoside triphosphate pyrophosphatase that hydrolyzes dTTP and UTP. May have a dual role in cell division arrest and in preventing the incorporation of modified nucleotides into cellular nucleic acids.</text>
</comment>
<comment type="catalytic activity">
    <reaction evidence="1">
        <text>dTTP + H2O = dTMP + diphosphate + H(+)</text>
        <dbReference type="Rhea" id="RHEA:28534"/>
        <dbReference type="ChEBI" id="CHEBI:15377"/>
        <dbReference type="ChEBI" id="CHEBI:15378"/>
        <dbReference type="ChEBI" id="CHEBI:33019"/>
        <dbReference type="ChEBI" id="CHEBI:37568"/>
        <dbReference type="ChEBI" id="CHEBI:63528"/>
        <dbReference type="EC" id="3.6.1.9"/>
    </reaction>
</comment>
<comment type="catalytic activity">
    <reaction evidence="1">
        <text>UTP + H2O = UMP + diphosphate + H(+)</text>
        <dbReference type="Rhea" id="RHEA:29395"/>
        <dbReference type="ChEBI" id="CHEBI:15377"/>
        <dbReference type="ChEBI" id="CHEBI:15378"/>
        <dbReference type="ChEBI" id="CHEBI:33019"/>
        <dbReference type="ChEBI" id="CHEBI:46398"/>
        <dbReference type="ChEBI" id="CHEBI:57865"/>
        <dbReference type="EC" id="3.6.1.9"/>
    </reaction>
</comment>
<comment type="cofactor">
    <cofactor evidence="1">
        <name>a divalent metal cation</name>
        <dbReference type="ChEBI" id="CHEBI:60240"/>
    </cofactor>
</comment>
<comment type="subcellular location">
    <subcellularLocation>
        <location evidence="1">Cytoplasm</location>
    </subcellularLocation>
</comment>
<comment type="similarity">
    <text evidence="1">Belongs to the Maf family. YhdE subfamily.</text>
</comment>
<evidence type="ECO:0000255" key="1">
    <source>
        <dbReference type="HAMAP-Rule" id="MF_00528"/>
    </source>
</evidence>
<feature type="chain" id="PRO_1000211768" description="dTTP/UTP pyrophosphatase">
    <location>
        <begin position="1"/>
        <end position="193"/>
    </location>
</feature>
<feature type="active site" description="Proton acceptor" evidence="1">
    <location>
        <position position="71"/>
    </location>
</feature>
<feature type="site" description="Important for substrate specificity" evidence="1">
    <location>
        <position position="13"/>
    </location>
</feature>
<feature type="site" description="Important for substrate specificity" evidence="1">
    <location>
        <position position="72"/>
    </location>
</feature>
<feature type="site" description="Important for substrate specificity" evidence="1">
    <location>
        <position position="156"/>
    </location>
</feature>
<dbReference type="EC" id="3.6.1.9" evidence="1"/>
<dbReference type="EMBL" id="CP001251">
    <property type="protein sequence ID" value="ACK42679.1"/>
    <property type="molecule type" value="Genomic_DNA"/>
</dbReference>
<dbReference type="RefSeq" id="WP_012583757.1">
    <property type="nucleotide sequence ID" value="NC_011661.1"/>
</dbReference>
<dbReference type="RefSeq" id="YP_002353293.1">
    <property type="nucleotide sequence ID" value="NC_011661.1"/>
</dbReference>
<dbReference type="SMR" id="B8E0U2"/>
<dbReference type="FunCoup" id="B8E0U2">
    <property type="interactions" value="299"/>
</dbReference>
<dbReference type="STRING" id="515635.Dtur_1405"/>
<dbReference type="EnsemblBacteria" id="ACK42679">
    <property type="protein sequence ID" value="ACK42679"/>
    <property type="gene ID" value="Dtur_1405"/>
</dbReference>
<dbReference type="KEGG" id="dtu:Dtur_1405"/>
<dbReference type="PATRIC" id="fig|515635.4.peg.1452"/>
<dbReference type="eggNOG" id="COG0424">
    <property type="taxonomic scope" value="Bacteria"/>
</dbReference>
<dbReference type="HOGENOM" id="CLU_040416_0_0_0"/>
<dbReference type="InParanoid" id="B8E0U2"/>
<dbReference type="OrthoDB" id="9807767at2"/>
<dbReference type="Proteomes" id="UP000007719">
    <property type="component" value="Chromosome"/>
</dbReference>
<dbReference type="GO" id="GO:0005737">
    <property type="term" value="C:cytoplasm"/>
    <property type="evidence" value="ECO:0007669"/>
    <property type="project" value="UniProtKB-SubCell"/>
</dbReference>
<dbReference type="GO" id="GO:0036218">
    <property type="term" value="F:dTTP diphosphatase activity"/>
    <property type="evidence" value="ECO:0007669"/>
    <property type="project" value="RHEA"/>
</dbReference>
<dbReference type="GO" id="GO:0047429">
    <property type="term" value="F:nucleoside triphosphate diphosphatase activity"/>
    <property type="evidence" value="ECO:0000318"/>
    <property type="project" value="GO_Central"/>
</dbReference>
<dbReference type="GO" id="GO:0036221">
    <property type="term" value="F:UTP diphosphatase activity"/>
    <property type="evidence" value="ECO:0007669"/>
    <property type="project" value="RHEA"/>
</dbReference>
<dbReference type="GO" id="GO:0009117">
    <property type="term" value="P:nucleotide metabolic process"/>
    <property type="evidence" value="ECO:0007669"/>
    <property type="project" value="UniProtKB-KW"/>
</dbReference>
<dbReference type="CDD" id="cd00555">
    <property type="entry name" value="Maf"/>
    <property type="match status" value="1"/>
</dbReference>
<dbReference type="FunFam" id="3.90.950.10:FF:000007">
    <property type="entry name" value="dTTP/UTP pyrophosphatase"/>
    <property type="match status" value="1"/>
</dbReference>
<dbReference type="Gene3D" id="3.90.950.10">
    <property type="match status" value="1"/>
</dbReference>
<dbReference type="HAMAP" id="MF_00528">
    <property type="entry name" value="Maf"/>
    <property type="match status" value="1"/>
</dbReference>
<dbReference type="InterPro" id="IPR029001">
    <property type="entry name" value="ITPase-like_fam"/>
</dbReference>
<dbReference type="InterPro" id="IPR003697">
    <property type="entry name" value="Maf-like"/>
</dbReference>
<dbReference type="NCBIfam" id="TIGR00172">
    <property type="entry name" value="maf"/>
    <property type="match status" value="1"/>
</dbReference>
<dbReference type="PANTHER" id="PTHR43213">
    <property type="entry name" value="BIFUNCTIONAL DTTP/UTP PYROPHOSPHATASE/METHYLTRANSFERASE PROTEIN-RELATED"/>
    <property type="match status" value="1"/>
</dbReference>
<dbReference type="PANTHER" id="PTHR43213:SF5">
    <property type="entry name" value="BIFUNCTIONAL DTTP_UTP PYROPHOSPHATASE_METHYLTRANSFERASE PROTEIN-RELATED"/>
    <property type="match status" value="1"/>
</dbReference>
<dbReference type="Pfam" id="PF02545">
    <property type="entry name" value="Maf"/>
    <property type="match status" value="1"/>
</dbReference>
<dbReference type="PIRSF" id="PIRSF006305">
    <property type="entry name" value="Maf"/>
    <property type="match status" value="1"/>
</dbReference>
<dbReference type="SUPFAM" id="SSF52972">
    <property type="entry name" value="ITPase-like"/>
    <property type="match status" value="1"/>
</dbReference>
<sequence length="193" mass="21742">MRKEIILASNSPRRIYLLGQIGIDFKVVSPNVEEEGNSERRSPVDIVKSNALKKVQKVAEEYRNAIIIGADTVVVLDGEIIGKPKDERDAIRILKRLRDRYHFVFSGVAVMETPEEKVLTSVVRSKVKMRDYSDEEIERYVATGEPMDKAGAYGIQGKGALLVEKIEGDYYNIVGLPLVRLNSLLNRFGYSLL</sequence>
<proteinExistence type="inferred from homology"/>
<accession>B8E0U2</accession>
<gene>
    <name type="ordered locus">Dtur_1405</name>
</gene>
<name>NTPPA_DICTD</name>
<reference key="1">
    <citation type="journal article" date="2016" name="Front. Microbiol.">
        <title>The complete genome sequence of hyperthermophile Dictyoglomus turgidum DSM 6724 reveals a specialized carbohydrate fermentor.</title>
        <authorList>
            <person name="Brumm P.J."/>
            <person name="Gowda K."/>
            <person name="Robb F.T."/>
            <person name="Mead D.A."/>
        </authorList>
    </citation>
    <scope>NUCLEOTIDE SEQUENCE [LARGE SCALE GENOMIC DNA]</scope>
    <source>
        <strain>DSM 6724 / Z-1310</strain>
    </source>
</reference>
<keyword id="KW-0963">Cytoplasm</keyword>
<keyword id="KW-0378">Hydrolase</keyword>
<keyword id="KW-0546">Nucleotide metabolism</keyword>
<keyword id="KW-1185">Reference proteome</keyword>
<organism>
    <name type="scientific">Dictyoglomus turgidum (strain DSM 6724 / Z-1310)</name>
    <dbReference type="NCBI Taxonomy" id="515635"/>
    <lineage>
        <taxon>Bacteria</taxon>
        <taxon>Pseudomonadati</taxon>
        <taxon>Dictyoglomota</taxon>
        <taxon>Dictyoglomia</taxon>
        <taxon>Dictyoglomales</taxon>
        <taxon>Dictyoglomaceae</taxon>
        <taxon>Dictyoglomus</taxon>
    </lineage>
</organism>
<protein>
    <recommendedName>
        <fullName evidence="1">dTTP/UTP pyrophosphatase</fullName>
        <shortName evidence="1">dTTPase/UTPase</shortName>
        <ecNumber evidence="1">3.6.1.9</ecNumber>
    </recommendedName>
    <alternativeName>
        <fullName evidence="1">Nucleoside triphosphate pyrophosphatase</fullName>
    </alternativeName>
    <alternativeName>
        <fullName evidence="1">Nucleotide pyrophosphatase</fullName>
        <shortName evidence="1">Nucleotide PPase</shortName>
    </alternativeName>
</protein>